<evidence type="ECO:0000250" key="1"/>
<evidence type="ECO:0000255" key="2"/>
<evidence type="ECO:0000305" key="3"/>
<name>TIM21_KLULA</name>
<gene>
    <name type="primary">TIM21</name>
    <name type="ordered locus">KLLA0B05786g</name>
</gene>
<protein>
    <recommendedName>
        <fullName>Mitochondrial import inner membrane translocase subunit TIM21</fullName>
    </recommendedName>
</protein>
<dbReference type="EMBL" id="CR382122">
    <property type="protein sequence ID" value="CAH02186.1"/>
    <property type="molecule type" value="Genomic_DNA"/>
</dbReference>
<dbReference type="RefSeq" id="XP_451793.1">
    <property type="nucleotide sequence ID" value="XM_451793.1"/>
</dbReference>
<dbReference type="SMR" id="Q6CW96"/>
<dbReference type="FunCoup" id="Q6CW96">
    <property type="interactions" value="279"/>
</dbReference>
<dbReference type="STRING" id="284590.Q6CW96"/>
<dbReference type="PaxDb" id="284590-Q6CW96"/>
<dbReference type="KEGG" id="kla:KLLA0_B05786g"/>
<dbReference type="eggNOG" id="KOG4836">
    <property type="taxonomic scope" value="Eukaryota"/>
</dbReference>
<dbReference type="HOGENOM" id="CLU_089043_1_0_1"/>
<dbReference type="InParanoid" id="Q6CW96"/>
<dbReference type="OMA" id="HVESKQK"/>
<dbReference type="Proteomes" id="UP000000598">
    <property type="component" value="Chromosome B"/>
</dbReference>
<dbReference type="GO" id="GO:0005744">
    <property type="term" value="C:TIM23 mitochondrial import inner membrane translocase complex"/>
    <property type="evidence" value="ECO:0007669"/>
    <property type="project" value="InterPro"/>
</dbReference>
<dbReference type="GO" id="GO:0030150">
    <property type="term" value="P:protein import into mitochondrial matrix"/>
    <property type="evidence" value="ECO:0007669"/>
    <property type="project" value="InterPro"/>
</dbReference>
<dbReference type="FunFam" id="3.10.450.320:FF:000002">
    <property type="entry name" value="Mitochondrial import inner membrane translocase subunit tim21"/>
    <property type="match status" value="1"/>
</dbReference>
<dbReference type="Gene3D" id="3.10.450.320">
    <property type="entry name" value="Mitochondrial import inner membrane translocase subunit Tim21"/>
    <property type="match status" value="1"/>
</dbReference>
<dbReference type="InterPro" id="IPR013261">
    <property type="entry name" value="Tim21"/>
</dbReference>
<dbReference type="InterPro" id="IPR038552">
    <property type="entry name" value="Tim21_IMS_sf"/>
</dbReference>
<dbReference type="PANTHER" id="PTHR13032">
    <property type="entry name" value="MITOCHONDRIAL IMPORT INNER MEMBRANE TRANSLOCASE SUBUNIT TIM21"/>
    <property type="match status" value="1"/>
</dbReference>
<dbReference type="PANTHER" id="PTHR13032:SF6">
    <property type="entry name" value="MITOCHONDRIAL IMPORT INNER MEMBRANE TRANSLOCASE SUBUNIT TIM21"/>
    <property type="match status" value="1"/>
</dbReference>
<dbReference type="Pfam" id="PF08294">
    <property type="entry name" value="TIM21"/>
    <property type="match status" value="1"/>
</dbReference>
<keyword id="KW-0472">Membrane</keyword>
<keyword id="KW-0496">Mitochondrion</keyword>
<keyword id="KW-0999">Mitochondrion inner membrane</keyword>
<keyword id="KW-0653">Protein transport</keyword>
<keyword id="KW-1185">Reference proteome</keyword>
<keyword id="KW-0809">Transit peptide</keyword>
<keyword id="KW-0811">Translocation</keyword>
<keyword id="KW-0812">Transmembrane</keyword>
<keyword id="KW-1133">Transmembrane helix</keyword>
<keyword id="KW-0813">Transport</keyword>
<sequence>MFCQFISRPAQSLSGKFSSKTLCLPLIASPVRIKHTVQGYSTFNAQQNAGNKQQKKKIPLWPRIRAFTTFTFSGILVIGATGLAGVVIYLIGAELFSPSGDTQIFNRAVSKVENDEVARRLLKCNDTETSTERLKAYGEILTDDRWTRNRPISSTRRIDKEGKEHYLMRFHVESKQKMGIVHVEAKESDVNYQPDFVSMYLDIPGEKRHYLIKPKLSIVKPKGFLGVNWGPKRD</sequence>
<feature type="transit peptide" description="Mitochondrion" evidence="2">
    <location>
        <begin position="1"/>
        <end status="unknown"/>
    </location>
</feature>
<feature type="chain" id="PRO_0000043146" description="Mitochondrial import inner membrane translocase subunit TIM21">
    <location>
        <begin status="unknown"/>
        <end position="234"/>
    </location>
</feature>
<feature type="topological domain" description="Mitochondrial matrix" evidence="2">
    <location>
        <begin status="unknown"/>
        <end position="71"/>
    </location>
</feature>
<feature type="transmembrane region" description="Helical" evidence="2">
    <location>
        <begin position="72"/>
        <end position="92"/>
    </location>
</feature>
<feature type="topological domain" description="Mitochondrial intermembrane" evidence="2">
    <location>
        <begin position="93"/>
        <end position="234"/>
    </location>
</feature>
<accession>Q6CW96</accession>
<organism>
    <name type="scientific">Kluyveromyces lactis (strain ATCC 8585 / CBS 2359 / DSM 70799 / NBRC 1267 / NRRL Y-1140 / WM37)</name>
    <name type="common">Yeast</name>
    <name type="synonym">Candida sphaerica</name>
    <dbReference type="NCBI Taxonomy" id="284590"/>
    <lineage>
        <taxon>Eukaryota</taxon>
        <taxon>Fungi</taxon>
        <taxon>Dikarya</taxon>
        <taxon>Ascomycota</taxon>
        <taxon>Saccharomycotina</taxon>
        <taxon>Saccharomycetes</taxon>
        <taxon>Saccharomycetales</taxon>
        <taxon>Saccharomycetaceae</taxon>
        <taxon>Kluyveromyces</taxon>
    </lineage>
</organism>
<reference key="1">
    <citation type="journal article" date="2004" name="Nature">
        <title>Genome evolution in yeasts.</title>
        <authorList>
            <person name="Dujon B."/>
            <person name="Sherman D."/>
            <person name="Fischer G."/>
            <person name="Durrens P."/>
            <person name="Casaregola S."/>
            <person name="Lafontaine I."/>
            <person name="de Montigny J."/>
            <person name="Marck C."/>
            <person name="Neuveglise C."/>
            <person name="Talla E."/>
            <person name="Goffard N."/>
            <person name="Frangeul L."/>
            <person name="Aigle M."/>
            <person name="Anthouard V."/>
            <person name="Babour A."/>
            <person name="Barbe V."/>
            <person name="Barnay S."/>
            <person name="Blanchin S."/>
            <person name="Beckerich J.-M."/>
            <person name="Beyne E."/>
            <person name="Bleykasten C."/>
            <person name="Boisrame A."/>
            <person name="Boyer J."/>
            <person name="Cattolico L."/>
            <person name="Confanioleri F."/>
            <person name="de Daruvar A."/>
            <person name="Despons L."/>
            <person name="Fabre E."/>
            <person name="Fairhead C."/>
            <person name="Ferry-Dumazet H."/>
            <person name="Groppi A."/>
            <person name="Hantraye F."/>
            <person name="Hennequin C."/>
            <person name="Jauniaux N."/>
            <person name="Joyet P."/>
            <person name="Kachouri R."/>
            <person name="Kerrest A."/>
            <person name="Koszul R."/>
            <person name="Lemaire M."/>
            <person name="Lesur I."/>
            <person name="Ma L."/>
            <person name="Muller H."/>
            <person name="Nicaud J.-M."/>
            <person name="Nikolski M."/>
            <person name="Oztas S."/>
            <person name="Ozier-Kalogeropoulos O."/>
            <person name="Pellenz S."/>
            <person name="Potier S."/>
            <person name="Richard G.-F."/>
            <person name="Straub M.-L."/>
            <person name="Suleau A."/>
            <person name="Swennen D."/>
            <person name="Tekaia F."/>
            <person name="Wesolowski-Louvel M."/>
            <person name="Westhof E."/>
            <person name="Wirth B."/>
            <person name="Zeniou-Meyer M."/>
            <person name="Zivanovic Y."/>
            <person name="Bolotin-Fukuhara M."/>
            <person name="Thierry A."/>
            <person name="Bouchier C."/>
            <person name="Caudron B."/>
            <person name="Scarpelli C."/>
            <person name="Gaillardin C."/>
            <person name="Weissenbach J."/>
            <person name="Wincker P."/>
            <person name="Souciet J.-L."/>
        </authorList>
    </citation>
    <scope>NUCLEOTIDE SEQUENCE [LARGE SCALE GENOMIC DNA]</scope>
    <source>
        <strain>ATCC 8585 / CBS 2359 / DSM 70799 / NBRC 1267 / NRRL Y-1140 / WM37</strain>
    </source>
</reference>
<comment type="function">
    <text evidence="1">Essential component of the TIM23 complex, a complex that mediates the translocation of transit peptide-containing proteins across the mitochondrial inner membrane. Required to keep the TOM and the TIM23 complexes in close contact. At some point, it is released from the TOM23 complex to allow protein translocation into the mitochondrial matrix (By similarity).</text>
</comment>
<comment type="subunit">
    <text evidence="1">Component of the TIM23 complex, at least composed of TIM23, TIM17, TIM50 and TIM21.</text>
</comment>
<comment type="subcellular location">
    <subcellularLocation>
        <location evidence="1">Mitochondrion inner membrane</location>
        <topology evidence="1">Single-pass membrane protein</topology>
    </subcellularLocation>
</comment>
<comment type="similarity">
    <text evidence="3">Belongs to the TIM21 family.</text>
</comment>
<proteinExistence type="inferred from homology"/>